<name>ATPF2_BARHE</name>
<gene>
    <name evidence="1" type="primary">atpF2</name>
    <name type="ordered locus">BH04140</name>
</gene>
<accession>Q6G5K9</accession>
<organism>
    <name type="scientific">Bartonella henselae (strain ATCC 49882 / DSM 28221 / CCUG 30454 / Houston 1)</name>
    <name type="common">Rochalimaea henselae</name>
    <dbReference type="NCBI Taxonomy" id="283166"/>
    <lineage>
        <taxon>Bacteria</taxon>
        <taxon>Pseudomonadati</taxon>
        <taxon>Pseudomonadota</taxon>
        <taxon>Alphaproteobacteria</taxon>
        <taxon>Hyphomicrobiales</taxon>
        <taxon>Bartonellaceae</taxon>
        <taxon>Bartonella</taxon>
    </lineage>
</organism>
<sequence length="164" mass="18714">MTDTFWAFVGLVLFLALLVYFEVPEMVLRHLDTRAKRIKDELDEALRLREEAQEVLAEYQRKHAEAEKDAQEIIAAAKREVEAVISEARIKAEEYVKNRNKLAEQKIAQAEADAIRMVSSSAIDLAVSAARVLIEKELDSHKANELIKESLVQESLTKMKTYLN</sequence>
<proteinExistence type="inferred from homology"/>
<reference key="1">
    <citation type="journal article" date="2004" name="Proc. Natl. Acad. Sci. U.S.A.">
        <title>The louse-borne human pathogen Bartonella quintana is a genomic derivative of the zoonotic agent Bartonella henselae.</title>
        <authorList>
            <person name="Alsmark U.C.M."/>
            <person name="Frank A.C."/>
            <person name="Karlberg E.O."/>
            <person name="Legault B.-A."/>
            <person name="Ardell D.H."/>
            <person name="Canbaeck B."/>
            <person name="Eriksson A.-S."/>
            <person name="Naeslund A.K."/>
            <person name="Handley S.A."/>
            <person name="Huvet M."/>
            <person name="La Scola B."/>
            <person name="Holmberg M."/>
            <person name="Andersson S.G.E."/>
        </authorList>
    </citation>
    <scope>NUCLEOTIDE SEQUENCE [LARGE SCALE GENOMIC DNA]</scope>
    <source>
        <strain>ATCC 49882 / DSM 28221 / CCUG 30454 / Houston 1</strain>
    </source>
</reference>
<comment type="function">
    <text evidence="1">F(1)F(0) ATP synthase produces ATP from ADP in the presence of a proton or sodium gradient. F-type ATPases consist of two structural domains, F(1) containing the extramembraneous catalytic core and F(0) containing the membrane proton channel, linked together by a central stalk and a peripheral stalk. During catalysis, ATP synthesis in the catalytic domain of F(1) is coupled via a rotary mechanism of the central stalk subunits to proton translocation.</text>
</comment>
<comment type="function">
    <text evidence="1">Component of the F(0) channel, it forms part of the peripheral stalk, linking F(1) to F(0).</text>
</comment>
<comment type="subunit">
    <text evidence="1">F-type ATPases have 2 components, F(1) - the catalytic core - and F(0) - the membrane proton channel. F(1) has five subunits: alpha(3), beta(3), gamma(1), delta(1), epsilon(1). F(0) has three main subunits: a(1), b(2) and c(10-14). The alpha and beta chains form an alternating ring which encloses part of the gamma chain. F(1) is attached to F(0) by a central stalk formed by the gamma and epsilon chains, while a peripheral stalk is formed by the delta and b chains.</text>
</comment>
<comment type="subcellular location">
    <subcellularLocation>
        <location evidence="1">Cell inner membrane</location>
        <topology evidence="1">Single-pass membrane protein</topology>
    </subcellularLocation>
</comment>
<comment type="similarity">
    <text evidence="1">Belongs to the ATPase B chain family.</text>
</comment>
<protein>
    <recommendedName>
        <fullName evidence="1">ATP synthase subunit b 2</fullName>
    </recommendedName>
    <alternativeName>
        <fullName evidence="1">ATP synthase F(0) sector subunit b 2</fullName>
    </alternativeName>
    <alternativeName>
        <fullName evidence="1">ATPase subunit I 2</fullName>
    </alternativeName>
    <alternativeName>
        <fullName evidence="1">F-type ATPase subunit b 2</fullName>
        <shortName evidence="1">F-ATPase subunit b 2</shortName>
    </alternativeName>
</protein>
<keyword id="KW-0066">ATP synthesis</keyword>
<keyword id="KW-0997">Cell inner membrane</keyword>
<keyword id="KW-1003">Cell membrane</keyword>
<keyword id="KW-0138">CF(0)</keyword>
<keyword id="KW-0375">Hydrogen ion transport</keyword>
<keyword id="KW-0406">Ion transport</keyword>
<keyword id="KW-0472">Membrane</keyword>
<keyword id="KW-0812">Transmembrane</keyword>
<keyword id="KW-1133">Transmembrane helix</keyword>
<keyword id="KW-0813">Transport</keyword>
<dbReference type="EMBL" id="BX897699">
    <property type="protein sequence ID" value="CAF27223.1"/>
    <property type="molecule type" value="Genomic_DNA"/>
</dbReference>
<dbReference type="RefSeq" id="WP_011180348.1">
    <property type="nucleotide sequence ID" value="NZ_LRIJ02000001.1"/>
</dbReference>
<dbReference type="SMR" id="Q6G5K9"/>
<dbReference type="PaxDb" id="283166-BH04140"/>
<dbReference type="EnsemblBacteria" id="CAF27223">
    <property type="protein sequence ID" value="CAF27223"/>
    <property type="gene ID" value="BH04140"/>
</dbReference>
<dbReference type="KEGG" id="bhe:BH04140"/>
<dbReference type="eggNOG" id="COG0711">
    <property type="taxonomic scope" value="Bacteria"/>
</dbReference>
<dbReference type="OrthoDB" id="8479836at2"/>
<dbReference type="Proteomes" id="UP000000421">
    <property type="component" value="Chromosome"/>
</dbReference>
<dbReference type="GO" id="GO:0005886">
    <property type="term" value="C:plasma membrane"/>
    <property type="evidence" value="ECO:0007669"/>
    <property type="project" value="UniProtKB-SubCell"/>
</dbReference>
<dbReference type="GO" id="GO:0045259">
    <property type="term" value="C:proton-transporting ATP synthase complex"/>
    <property type="evidence" value="ECO:0007669"/>
    <property type="project" value="UniProtKB-KW"/>
</dbReference>
<dbReference type="GO" id="GO:0046933">
    <property type="term" value="F:proton-transporting ATP synthase activity, rotational mechanism"/>
    <property type="evidence" value="ECO:0007669"/>
    <property type="project" value="UniProtKB-UniRule"/>
</dbReference>
<dbReference type="GO" id="GO:0046961">
    <property type="term" value="F:proton-transporting ATPase activity, rotational mechanism"/>
    <property type="evidence" value="ECO:0007669"/>
    <property type="project" value="TreeGrafter"/>
</dbReference>
<dbReference type="CDD" id="cd06503">
    <property type="entry name" value="ATP-synt_Fo_b"/>
    <property type="match status" value="1"/>
</dbReference>
<dbReference type="HAMAP" id="MF_01398">
    <property type="entry name" value="ATP_synth_b_bprime"/>
    <property type="match status" value="1"/>
</dbReference>
<dbReference type="InterPro" id="IPR002146">
    <property type="entry name" value="ATP_synth_b/b'su_bac/chlpt"/>
</dbReference>
<dbReference type="InterPro" id="IPR050059">
    <property type="entry name" value="ATP_synthase_B_chain"/>
</dbReference>
<dbReference type="NCBIfam" id="NF006611">
    <property type="entry name" value="PRK09173.1"/>
    <property type="match status" value="1"/>
</dbReference>
<dbReference type="PANTHER" id="PTHR33445:SF1">
    <property type="entry name" value="ATP SYNTHASE SUBUNIT B"/>
    <property type="match status" value="1"/>
</dbReference>
<dbReference type="PANTHER" id="PTHR33445">
    <property type="entry name" value="ATP SYNTHASE SUBUNIT B', CHLOROPLASTIC"/>
    <property type="match status" value="1"/>
</dbReference>
<dbReference type="Pfam" id="PF00430">
    <property type="entry name" value="ATP-synt_B"/>
    <property type="match status" value="1"/>
</dbReference>
<evidence type="ECO:0000255" key="1">
    <source>
        <dbReference type="HAMAP-Rule" id="MF_01398"/>
    </source>
</evidence>
<feature type="chain" id="PRO_0000368343" description="ATP synthase subunit b 2">
    <location>
        <begin position="1"/>
        <end position="164"/>
    </location>
</feature>
<feature type="transmembrane region" description="Helical" evidence="1">
    <location>
        <begin position="4"/>
        <end position="24"/>
    </location>
</feature>